<name>YHAH_ECOLI</name>
<organism>
    <name type="scientific">Escherichia coli (strain K12)</name>
    <dbReference type="NCBI Taxonomy" id="83333"/>
    <lineage>
        <taxon>Bacteria</taxon>
        <taxon>Pseudomonadati</taxon>
        <taxon>Pseudomonadota</taxon>
        <taxon>Gammaproteobacteria</taxon>
        <taxon>Enterobacterales</taxon>
        <taxon>Enterobacteriaceae</taxon>
        <taxon>Escherichia</taxon>
    </lineage>
</organism>
<comment type="subcellular location">
    <subcellularLocation>
        <location>Cell inner membrane</location>
        <topology>Multi-pass membrane protein</topology>
    </subcellularLocation>
</comment>
<comment type="similarity">
    <text evidence="2">To E.coli YhaI.</text>
</comment>
<feature type="chain" id="PRO_0000169443" description="Inner membrane protein YhaH">
    <location>
        <begin position="1"/>
        <end position="121"/>
    </location>
</feature>
<feature type="topological domain" description="Periplasmic" evidence="1">
    <location>
        <begin position="1"/>
        <end position="23"/>
    </location>
</feature>
<feature type="transmembrane region" description="Helical" evidence="1">
    <location>
        <begin position="24"/>
        <end position="44"/>
    </location>
</feature>
<feature type="topological domain" description="Cytoplasmic" evidence="1">
    <location>
        <begin position="45"/>
        <end position="49"/>
    </location>
</feature>
<feature type="transmembrane region" description="Helical" evidence="1">
    <location>
        <begin position="50"/>
        <end position="70"/>
    </location>
</feature>
<feature type="topological domain" description="Periplasmic" evidence="1">
    <location>
        <begin position="71"/>
        <end position="80"/>
    </location>
</feature>
<feature type="transmembrane region" description="Helical" evidence="1">
    <location>
        <begin position="81"/>
        <end position="101"/>
    </location>
</feature>
<feature type="topological domain" description="Cytoplasmic" evidence="1">
    <location>
        <begin position="102"/>
        <end position="121"/>
    </location>
</feature>
<keyword id="KW-0997">Cell inner membrane</keyword>
<keyword id="KW-1003">Cell membrane</keyword>
<keyword id="KW-0472">Membrane</keyword>
<keyword id="KW-1185">Reference proteome</keyword>
<keyword id="KW-0812">Transmembrane</keyword>
<keyword id="KW-1133">Transmembrane helix</keyword>
<sequence>MDWYLKVLKNYVGFRGRARRKEYWMFILVNIIFTFVLGLLDKMLGWQRAGGEGILTTIYGILVFLPWWAVQFRRLHDTDRSAWWALLFLIPFIGWLIIIVFNCQAGTPGENRFGPDPKLEP</sequence>
<accession>P64590</accession>
<accession>P42621</accession>
<accession>Q2M9A3</accession>
<protein>
    <recommendedName>
        <fullName>Inner membrane protein YhaH</fullName>
    </recommendedName>
</protein>
<gene>
    <name type="primary">yhaH</name>
    <name type="ordered locus">b3103</name>
    <name type="ordered locus">JW3074</name>
</gene>
<dbReference type="EMBL" id="U18997">
    <property type="protein sequence ID" value="AAA57907.1"/>
    <property type="status" value="ALT_FRAME"/>
    <property type="molecule type" value="Genomic_DNA"/>
</dbReference>
<dbReference type="EMBL" id="U00096">
    <property type="protein sequence ID" value="AAC76138.1"/>
    <property type="molecule type" value="Genomic_DNA"/>
</dbReference>
<dbReference type="EMBL" id="AP009048">
    <property type="protein sequence ID" value="BAE77153.1"/>
    <property type="molecule type" value="Genomic_DNA"/>
</dbReference>
<dbReference type="PIR" id="D65099">
    <property type="entry name" value="D65099"/>
</dbReference>
<dbReference type="RefSeq" id="NP_417574.1">
    <property type="nucleotide sequence ID" value="NC_000913.3"/>
</dbReference>
<dbReference type="RefSeq" id="WP_000384145.1">
    <property type="nucleotide sequence ID" value="NZ_STEB01000001.1"/>
</dbReference>
<dbReference type="BioGRID" id="4260936">
    <property type="interactions" value="6"/>
</dbReference>
<dbReference type="FunCoup" id="P64590">
    <property type="interactions" value="47"/>
</dbReference>
<dbReference type="STRING" id="511145.b3103"/>
<dbReference type="PaxDb" id="511145-b3103"/>
<dbReference type="DNASU" id="947617"/>
<dbReference type="EnsemblBacteria" id="AAC76138">
    <property type="protein sequence ID" value="AAC76138"/>
    <property type="gene ID" value="b3103"/>
</dbReference>
<dbReference type="GeneID" id="947617"/>
<dbReference type="KEGG" id="ecj:JW3074"/>
<dbReference type="KEGG" id="eco:b3103"/>
<dbReference type="KEGG" id="ecoc:C3026_16940"/>
<dbReference type="PATRIC" id="fig|511145.12.peg.3199"/>
<dbReference type="EchoBASE" id="EB2603"/>
<dbReference type="eggNOG" id="COG3152">
    <property type="taxonomic scope" value="Bacteria"/>
</dbReference>
<dbReference type="HOGENOM" id="CLU_093674_8_0_6"/>
<dbReference type="InParanoid" id="P64590"/>
<dbReference type="OMA" id="WMFTLFN"/>
<dbReference type="OrthoDB" id="9812349at2"/>
<dbReference type="PhylomeDB" id="P64590"/>
<dbReference type="BioCyc" id="EcoCyc:G7617-MONOMER"/>
<dbReference type="PRO" id="PR:P64590"/>
<dbReference type="Proteomes" id="UP000000625">
    <property type="component" value="Chromosome"/>
</dbReference>
<dbReference type="GO" id="GO:0005886">
    <property type="term" value="C:plasma membrane"/>
    <property type="evidence" value="ECO:0000314"/>
    <property type="project" value="EcoCyc"/>
</dbReference>
<dbReference type="InterPro" id="IPR008523">
    <property type="entry name" value="DUF805"/>
</dbReference>
<dbReference type="PANTHER" id="PTHR34980:SF2">
    <property type="entry name" value="INNER MEMBRANE PROTEIN YHAH-RELATED"/>
    <property type="match status" value="1"/>
</dbReference>
<dbReference type="PANTHER" id="PTHR34980">
    <property type="entry name" value="INNER MEMBRANE PROTEIN-RELATED-RELATED"/>
    <property type="match status" value="1"/>
</dbReference>
<dbReference type="Pfam" id="PF05656">
    <property type="entry name" value="DUF805"/>
    <property type="match status" value="1"/>
</dbReference>
<proteinExistence type="evidence at protein level"/>
<evidence type="ECO:0000255" key="1"/>
<evidence type="ECO:0000305" key="2"/>
<reference key="1">
    <citation type="journal article" date="1997" name="Science">
        <title>The complete genome sequence of Escherichia coli K-12.</title>
        <authorList>
            <person name="Blattner F.R."/>
            <person name="Plunkett G. III"/>
            <person name="Bloch C.A."/>
            <person name="Perna N.T."/>
            <person name="Burland V."/>
            <person name="Riley M."/>
            <person name="Collado-Vides J."/>
            <person name="Glasner J.D."/>
            <person name="Rode C.K."/>
            <person name="Mayhew G.F."/>
            <person name="Gregor J."/>
            <person name="Davis N.W."/>
            <person name="Kirkpatrick H.A."/>
            <person name="Goeden M.A."/>
            <person name="Rose D.J."/>
            <person name="Mau B."/>
            <person name="Shao Y."/>
        </authorList>
    </citation>
    <scope>NUCLEOTIDE SEQUENCE [LARGE SCALE GENOMIC DNA]</scope>
    <source>
        <strain>K12 / MG1655 / ATCC 47076</strain>
    </source>
</reference>
<reference key="2">
    <citation type="journal article" date="2006" name="Mol. Syst. Biol.">
        <title>Highly accurate genome sequences of Escherichia coli K-12 strains MG1655 and W3110.</title>
        <authorList>
            <person name="Hayashi K."/>
            <person name="Morooka N."/>
            <person name="Yamamoto Y."/>
            <person name="Fujita K."/>
            <person name="Isono K."/>
            <person name="Choi S."/>
            <person name="Ohtsubo E."/>
            <person name="Baba T."/>
            <person name="Wanner B.L."/>
            <person name="Mori H."/>
            <person name="Horiuchi T."/>
        </authorList>
    </citation>
    <scope>NUCLEOTIDE SEQUENCE [LARGE SCALE GENOMIC DNA]</scope>
    <source>
        <strain>K12 / W3110 / ATCC 27325 / DSM 5911</strain>
    </source>
</reference>
<reference key="3">
    <citation type="journal article" date="2005" name="Science">
        <title>Global topology analysis of the Escherichia coli inner membrane proteome.</title>
        <authorList>
            <person name="Daley D.O."/>
            <person name="Rapp M."/>
            <person name="Granseth E."/>
            <person name="Melen K."/>
            <person name="Drew D."/>
            <person name="von Heijne G."/>
        </authorList>
    </citation>
    <scope>TOPOLOGY [LARGE SCALE ANALYSIS]</scope>
    <source>
        <strain>K12 / MG1655 / ATCC 47076</strain>
    </source>
</reference>